<feature type="chain" id="PRO_0000167883" description="Electron transfer flavoprotein subunit beta">
    <location>
        <begin position="1"/>
        <end position="266"/>
    </location>
</feature>
<comment type="function">
    <text evidence="1">The electron transfer flavoprotein serves as a specific electron acceptor for other dehydrogenases. It transfers the electrons to the main respiratory chain via ETF-ubiquinone oxidoreductase (ETF dehydrogenase) (By similarity).</text>
</comment>
<comment type="cofactor">
    <cofactor evidence="1">
        <name>FAD</name>
        <dbReference type="ChEBI" id="CHEBI:57692"/>
    </cofactor>
    <text evidence="1">Binds 1 FAD per dimer.</text>
</comment>
<comment type="cofactor">
    <cofactor evidence="1">
        <name>AMP</name>
        <dbReference type="ChEBI" id="CHEBI:456215"/>
    </cofactor>
    <text evidence="1">Binds 1 AMP per subunit.</text>
</comment>
<comment type="subunit">
    <text>Heterodimer of an alpha and a beta subunit.</text>
</comment>
<comment type="induction">
    <text evidence="2">Induced in response to the thiol oxidant diamide.</text>
</comment>
<comment type="similarity">
    <text evidence="3">Belongs to the ETF beta-subunit/FixA family.</text>
</comment>
<proteinExistence type="evidence at protein level"/>
<accession>P64098</accession>
<accession>A0A1R3Y2W3</accession>
<accession>O53276</accession>
<accession>X2BMG9</accession>
<keyword id="KW-0249">Electron transport</keyword>
<keyword id="KW-0274">FAD</keyword>
<keyword id="KW-0285">Flavoprotein</keyword>
<keyword id="KW-1185">Reference proteome</keyword>
<keyword id="KW-0813">Transport</keyword>
<organism>
    <name type="scientific">Mycobacterium bovis (strain ATCC BAA-935 / AF2122/97)</name>
    <dbReference type="NCBI Taxonomy" id="233413"/>
    <lineage>
        <taxon>Bacteria</taxon>
        <taxon>Bacillati</taxon>
        <taxon>Actinomycetota</taxon>
        <taxon>Actinomycetes</taxon>
        <taxon>Mycobacteriales</taxon>
        <taxon>Mycobacteriaceae</taxon>
        <taxon>Mycobacterium</taxon>
        <taxon>Mycobacterium tuberculosis complex</taxon>
    </lineage>
</organism>
<evidence type="ECO:0000250" key="1"/>
<evidence type="ECO:0000269" key="2">
    <source>
    </source>
</evidence>
<evidence type="ECO:0000305" key="3"/>
<reference key="1">
    <citation type="journal article" date="2003" name="Proc. Natl. Acad. Sci. U.S.A.">
        <title>The complete genome sequence of Mycobacterium bovis.</title>
        <authorList>
            <person name="Garnier T."/>
            <person name="Eiglmeier K."/>
            <person name="Camus J.-C."/>
            <person name="Medina N."/>
            <person name="Mansoor H."/>
            <person name="Pryor M."/>
            <person name="Duthoy S."/>
            <person name="Grondin S."/>
            <person name="Lacroix C."/>
            <person name="Monsempe C."/>
            <person name="Simon S."/>
            <person name="Harris B."/>
            <person name="Atkin R."/>
            <person name="Doggett J."/>
            <person name="Mayes R."/>
            <person name="Keating L."/>
            <person name="Wheeler P.R."/>
            <person name="Parkhill J."/>
            <person name="Barrell B.G."/>
            <person name="Cole S.T."/>
            <person name="Gordon S.V."/>
            <person name="Hewinson R.G."/>
        </authorList>
    </citation>
    <scope>NUCLEOTIDE SEQUENCE [LARGE SCALE GENOMIC DNA]</scope>
    <source>
        <strain>ATCC BAA-935 / AF2122/97</strain>
    </source>
</reference>
<reference key="2">
    <citation type="journal article" date="2017" name="Genome Announc.">
        <title>Updated reference genome sequence and annotation of Mycobacterium bovis AF2122/97.</title>
        <authorList>
            <person name="Malone K.M."/>
            <person name="Farrell D."/>
            <person name="Stuber T.P."/>
            <person name="Schubert O.T."/>
            <person name="Aebersold R."/>
            <person name="Robbe-Austerman S."/>
            <person name="Gordon S.V."/>
        </authorList>
    </citation>
    <scope>NUCLEOTIDE SEQUENCE [LARGE SCALE GENOMIC DNA]</scope>
    <scope>GENOME REANNOTATION</scope>
    <source>
        <strain>ATCC BAA-935 / AF2122/97</strain>
    </source>
</reference>
<reference key="3">
    <citation type="journal article" date="2005" name="FEMS Microbiol. Lett.">
        <title>Thiol specific oxidative stress response in Mycobacteria.</title>
        <authorList>
            <person name="Dosanjh N.S."/>
            <person name="Rawat M."/>
            <person name="Chung J.-H."/>
            <person name="Av-Gay Y."/>
        </authorList>
    </citation>
    <scope>IDENTIFICATION BY MASS SPECTROMETRY</scope>
    <scope>INDUCTION</scope>
    <source>
        <strain>BCG / Pasteur</strain>
    </source>
</reference>
<name>ETFB_MYCBO</name>
<gene>
    <name type="primary">etfB</name>
    <name type="synonym">fixA</name>
    <name type="ordered locus">BQ2027_MB3055C</name>
</gene>
<protein>
    <recommendedName>
        <fullName>Electron transfer flavoprotein subunit beta</fullName>
        <shortName>Beta-ETF</shortName>
    </recommendedName>
    <alternativeName>
        <fullName>Electron transfer flavoprotein small subunit</fullName>
        <shortName>ETFSS</shortName>
    </alternativeName>
</protein>
<dbReference type="EMBL" id="LT708304">
    <property type="protein sequence ID" value="SIU01679.1"/>
    <property type="molecule type" value="Genomic_DNA"/>
</dbReference>
<dbReference type="RefSeq" id="NP_856700.1">
    <property type="nucleotide sequence ID" value="NC_002945.3"/>
</dbReference>
<dbReference type="RefSeq" id="WP_003415921.1">
    <property type="nucleotide sequence ID" value="NC_002945.4"/>
</dbReference>
<dbReference type="SMR" id="P64098"/>
<dbReference type="KEGG" id="mbo:BQ2027_MB3055C"/>
<dbReference type="PATRIC" id="fig|233413.5.peg.3356"/>
<dbReference type="Proteomes" id="UP000001419">
    <property type="component" value="Chromosome"/>
</dbReference>
<dbReference type="GO" id="GO:0005829">
    <property type="term" value="C:cytosol"/>
    <property type="evidence" value="ECO:0007669"/>
    <property type="project" value="TreeGrafter"/>
</dbReference>
<dbReference type="GO" id="GO:0009055">
    <property type="term" value="F:electron transfer activity"/>
    <property type="evidence" value="ECO:0007669"/>
    <property type="project" value="InterPro"/>
</dbReference>
<dbReference type="CDD" id="cd01714">
    <property type="entry name" value="ETF_beta"/>
    <property type="match status" value="1"/>
</dbReference>
<dbReference type="FunFam" id="3.40.50.620:FF:000086">
    <property type="entry name" value="Electron transfer flavoprotein subunit beta"/>
    <property type="match status" value="1"/>
</dbReference>
<dbReference type="Gene3D" id="3.40.50.620">
    <property type="entry name" value="HUPs"/>
    <property type="match status" value="1"/>
</dbReference>
<dbReference type="InterPro" id="IPR000049">
    <property type="entry name" value="ET-Flavoprotein_bsu_CS"/>
</dbReference>
<dbReference type="InterPro" id="IPR014730">
    <property type="entry name" value="ETF_a/b_N"/>
</dbReference>
<dbReference type="InterPro" id="IPR012255">
    <property type="entry name" value="ETF_b"/>
</dbReference>
<dbReference type="InterPro" id="IPR033948">
    <property type="entry name" value="ETF_beta_N"/>
</dbReference>
<dbReference type="InterPro" id="IPR014729">
    <property type="entry name" value="Rossmann-like_a/b/a_fold"/>
</dbReference>
<dbReference type="PANTHER" id="PTHR21294">
    <property type="entry name" value="ELECTRON TRANSFER FLAVOPROTEIN BETA-SUBUNIT"/>
    <property type="match status" value="1"/>
</dbReference>
<dbReference type="PANTHER" id="PTHR21294:SF8">
    <property type="entry name" value="ELECTRON TRANSFER FLAVOPROTEIN SUBUNIT BETA"/>
    <property type="match status" value="1"/>
</dbReference>
<dbReference type="Pfam" id="PF01012">
    <property type="entry name" value="ETF"/>
    <property type="match status" value="1"/>
</dbReference>
<dbReference type="PIRSF" id="PIRSF000090">
    <property type="entry name" value="Beta-ETF"/>
    <property type="match status" value="1"/>
</dbReference>
<dbReference type="SMART" id="SM00893">
    <property type="entry name" value="ETF"/>
    <property type="match status" value="1"/>
</dbReference>
<dbReference type="SUPFAM" id="SSF52402">
    <property type="entry name" value="Adenine nucleotide alpha hydrolases-like"/>
    <property type="match status" value="1"/>
</dbReference>
<dbReference type="PROSITE" id="PS01065">
    <property type="entry name" value="ETF_BETA"/>
    <property type="match status" value="1"/>
</dbReference>
<sequence length="266" mass="28081">MTNIVVLIKQVPDTWSERKLTDGDFTLDREAADAVLDEINERAVEEALQIREKEAADGIEGSVTVLTAGPERATEAIRKALSMGADKAVHLKDDGMHGSDVIQTGWALARALGTIEGTELVIAGNESTDGVGGAVPAIIAEYLGLPQLTHLRKVSIEGGKITGERETDEGVFTLEATLPAVISVNEKINEPRFPSFKGIMAAKKKEVTVLTLAEIGVESDEVGLANAGSTVLASTPKPAKTAGEKVTDEGEGGNQIVQYLVAQKII</sequence>